<feature type="chain" id="PRO_0000213125" description="Probable alginate O-acetylase AlgI">
    <location>
        <begin position="1"/>
        <end position="495"/>
    </location>
</feature>
<feature type="transmembrane region" description="Helical" evidence="2">
    <location>
        <begin position="7"/>
        <end position="24"/>
    </location>
</feature>
<feature type="transmembrane region" description="Helical" evidence="2">
    <location>
        <begin position="39"/>
        <end position="61"/>
    </location>
</feature>
<feature type="transmembrane region" description="Helical" evidence="2">
    <location>
        <begin position="101"/>
        <end position="123"/>
    </location>
</feature>
<feature type="transmembrane region" description="Helical" evidence="2">
    <location>
        <begin position="136"/>
        <end position="158"/>
    </location>
</feature>
<feature type="transmembrane region" description="Helical" evidence="2">
    <location>
        <begin position="296"/>
        <end position="318"/>
    </location>
</feature>
<feature type="transmembrane region" description="Helical" evidence="2">
    <location>
        <begin position="344"/>
        <end position="366"/>
    </location>
</feature>
<feature type="transmembrane region" description="Helical" evidence="2">
    <location>
        <begin position="387"/>
        <end position="409"/>
    </location>
</feature>
<feature type="transmembrane region" description="Helical" evidence="2">
    <location>
        <begin position="471"/>
        <end position="493"/>
    </location>
</feature>
<feature type="active site" evidence="2">
    <location>
        <position position="307"/>
    </location>
</feature>
<protein>
    <recommendedName>
        <fullName>Probable alginate O-acetylase AlgI</fullName>
        <ecNumber>2.3.1.-</ecNumber>
    </recommendedName>
    <alternativeName>
        <fullName>Alginate biosynthesis protein AlgI</fullName>
    </alternativeName>
</protein>
<gene>
    <name type="primary">algI</name>
</gene>
<dbReference type="EC" id="2.3.1.-"/>
<dbReference type="EMBL" id="AF527790">
    <property type="protein sequence ID" value="AAP46697.1"/>
    <property type="molecule type" value="Genomic_DNA"/>
</dbReference>
<dbReference type="SMR" id="P59789"/>
<dbReference type="eggNOG" id="COG1696">
    <property type="taxonomic scope" value="Bacteria"/>
</dbReference>
<dbReference type="UniPathway" id="UPA00286"/>
<dbReference type="GO" id="GO:0005886">
    <property type="term" value="C:plasma membrane"/>
    <property type="evidence" value="ECO:0007669"/>
    <property type="project" value="UniProtKB-SubCell"/>
</dbReference>
<dbReference type="GO" id="GO:0016746">
    <property type="term" value="F:acyltransferase activity"/>
    <property type="evidence" value="ECO:0007669"/>
    <property type="project" value="UniProtKB-KW"/>
</dbReference>
<dbReference type="GO" id="GO:0042121">
    <property type="term" value="P:alginic acid biosynthetic process"/>
    <property type="evidence" value="ECO:0007669"/>
    <property type="project" value="UniProtKB-UniPathway"/>
</dbReference>
<dbReference type="InterPro" id="IPR024194">
    <property type="entry name" value="Ac/AlaTfrase_AlgI/DltB"/>
</dbReference>
<dbReference type="InterPro" id="IPR028362">
    <property type="entry name" value="AlgI"/>
</dbReference>
<dbReference type="InterPro" id="IPR051085">
    <property type="entry name" value="MB_O-acyltransferase"/>
</dbReference>
<dbReference type="InterPro" id="IPR004299">
    <property type="entry name" value="MBOAT_fam"/>
</dbReference>
<dbReference type="PANTHER" id="PTHR13285">
    <property type="entry name" value="ACYLTRANSFERASE"/>
    <property type="match status" value="1"/>
</dbReference>
<dbReference type="PANTHER" id="PTHR13285:SF23">
    <property type="entry name" value="TEICHOIC ACID D-ALANYLTRANSFERASE"/>
    <property type="match status" value="1"/>
</dbReference>
<dbReference type="Pfam" id="PF03062">
    <property type="entry name" value="MBOAT"/>
    <property type="match status" value="1"/>
</dbReference>
<dbReference type="PIRSF" id="PIRSF500217">
    <property type="entry name" value="AlgI"/>
    <property type="match status" value="1"/>
</dbReference>
<dbReference type="PIRSF" id="PIRSF016636">
    <property type="entry name" value="AlgI_DltB"/>
    <property type="match status" value="1"/>
</dbReference>
<name>ALGI_PSEFL</name>
<keyword id="KW-0012">Acyltransferase</keyword>
<keyword id="KW-0016">Alginate biosynthesis</keyword>
<keyword id="KW-0997">Cell inner membrane</keyword>
<keyword id="KW-1003">Cell membrane</keyword>
<keyword id="KW-0472">Membrane</keyword>
<keyword id="KW-0808">Transferase</keyword>
<keyword id="KW-0812">Transmembrane</keyword>
<keyword id="KW-1133">Transmembrane helix</keyword>
<organism>
    <name type="scientific">Pseudomonas fluorescens</name>
    <dbReference type="NCBI Taxonomy" id="294"/>
    <lineage>
        <taxon>Bacteria</taxon>
        <taxon>Pseudomonadati</taxon>
        <taxon>Pseudomonadota</taxon>
        <taxon>Gammaproteobacteria</taxon>
        <taxon>Pseudomonadales</taxon>
        <taxon>Pseudomonadaceae</taxon>
        <taxon>Pseudomonas</taxon>
    </lineage>
</organism>
<accession>P59789</accession>
<comment type="function">
    <text evidence="1">Together with AlgJ and AlgF, forms an inner membrane complex which probably interacts with the alginate polymerization-transport complex and adds acetyl groups at the O-2 and O-3 positions of mannuronate residues. Acetylation of alginate is important for the architecture of biofilms and increases the ability of alginate to act as a defense barrier (By similarity).</text>
</comment>
<comment type="pathway">
    <text>Glycan biosynthesis; alginate biosynthesis.</text>
</comment>
<comment type="subcellular location">
    <subcellularLocation>
        <location evidence="1">Cell inner membrane</location>
        <topology evidence="1">Multi-pass membrane protein</topology>
    </subcellularLocation>
</comment>
<comment type="similarity">
    <text evidence="3">Belongs to the membrane-bound acyltransferase family.</text>
</comment>
<proteinExistence type="inferred from homology"/>
<reference key="1">
    <citation type="journal article" date="2003" name="J. Bacteriol.">
        <title>The Pseudomonas fluorescens AlgG protein, but not its mannuronan C-5-epimerase activity, is needed for alginate polymer formation.</title>
        <authorList>
            <person name="Gimmestad M."/>
            <person name="Sletta H."/>
            <person name="Ertesvaag H."/>
            <person name="Bakkevig K."/>
            <person name="Jain S."/>
            <person name="Suh S.-J."/>
            <person name="Skjaak-Braek G."/>
            <person name="Ellingsen T.E."/>
            <person name="Ohman D.E."/>
            <person name="Valla S."/>
        </authorList>
    </citation>
    <scope>NUCLEOTIDE SEQUENCE [GENOMIC DNA]</scope>
    <source>
        <strain>ATCC 17397 / DSM 50091 / CIP 73.25 / NCIMB 10525 / 12</strain>
    </source>
</reference>
<sequence>MVFSSNVFLFLFLPIFLGLYYLSGQRYRNLLLLLASYVFYAWWRVDFLALFAAVTLWNYWIGLKVGAAGVRTKPAQRWLLLGVVVDSINVMMKSAGLEPFILTHVLLPIGISFYIFESISYIIDVYRGDTPATRNLIDFAAFVAIFPHLIAGPVLRFRDLADQFNNRTHTLDKFSEGCTRFMQGFIKKVFIADTLAVVADHCFALQNPTTGDAWLGALAYTAQLYFDFSGYSDMAIGLGLMMGFRFMENFKQPYISQSITEFWRRWHISLSTWLRDYLYITLGGNRKGTLTTYRNLFLTMLLGGLWHGANITYIVWGAWHGMWLAIEKAIGLNTSPRSFNPVRWAFTFLLVVMGWVIFRAENLHVAGRMYGAMFSFGEWSLSELNRANLTGLQVATLVVAYATLAFFGLRDFYTNRPAEKTKPADPSLIKAVPGDNPGSIHEPGFTVGQDAAVQPAYWTADWPRYAMRAAVLLLFVASILKLSAQSFSPFLYFQF</sequence>
<evidence type="ECO:0000250" key="1"/>
<evidence type="ECO:0000255" key="2"/>
<evidence type="ECO:0000305" key="3"/>